<evidence type="ECO:0000250" key="1">
    <source>
        <dbReference type="UniProtKB" id="P23615"/>
    </source>
</evidence>
<evidence type="ECO:0000256" key="2">
    <source>
        <dbReference type="SAM" id="MobiDB-lite"/>
    </source>
</evidence>
<evidence type="ECO:0000305" key="3"/>
<feature type="chain" id="PRO_0000238575" description="Transcription elongation factor spt6">
    <location>
        <begin position="1"/>
        <end position="1417"/>
    </location>
</feature>
<feature type="domain" description="S1 motif">
    <location>
        <begin position="1108"/>
        <end position="1177"/>
    </location>
</feature>
<feature type="domain" description="SH2">
    <location>
        <begin position="1226"/>
        <end position="1326"/>
    </location>
</feature>
<feature type="region of interest" description="Disordered" evidence="2">
    <location>
        <begin position="1"/>
        <end position="109"/>
    </location>
</feature>
<feature type="region of interest" description="Disordered" evidence="2">
    <location>
        <begin position="122"/>
        <end position="185"/>
    </location>
</feature>
<feature type="region of interest" description="Disordered" evidence="2">
    <location>
        <begin position="1181"/>
        <end position="1215"/>
    </location>
</feature>
<feature type="compositionally biased region" description="Acidic residues" evidence="2">
    <location>
        <begin position="11"/>
        <end position="28"/>
    </location>
</feature>
<feature type="compositionally biased region" description="Acidic residues" evidence="2">
    <location>
        <begin position="43"/>
        <end position="54"/>
    </location>
</feature>
<feature type="compositionally biased region" description="Acidic residues" evidence="2">
    <location>
        <begin position="64"/>
        <end position="73"/>
    </location>
</feature>
<feature type="compositionally biased region" description="Polar residues" evidence="2">
    <location>
        <begin position="135"/>
        <end position="144"/>
    </location>
</feature>
<feature type="compositionally biased region" description="Acidic residues" evidence="2">
    <location>
        <begin position="166"/>
        <end position="179"/>
    </location>
</feature>
<feature type="compositionally biased region" description="Basic and acidic residues" evidence="2">
    <location>
        <begin position="1188"/>
        <end position="1215"/>
    </location>
</feature>
<protein>
    <recommendedName>
        <fullName>Transcription elongation factor spt6</fullName>
    </recommendedName>
    <alternativeName>
        <fullName>Chromatin elongation factor spt6</fullName>
    </alternativeName>
</protein>
<name>SPT6_EMENI</name>
<reference key="1">
    <citation type="journal article" date="2005" name="Nature">
        <title>Sequencing of Aspergillus nidulans and comparative analysis with A. fumigatus and A. oryzae.</title>
        <authorList>
            <person name="Galagan J.E."/>
            <person name="Calvo S.E."/>
            <person name="Cuomo C."/>
            <person name="Ma L.-J."/>
            <person name="Wortman J.R."/>
            <person name="Batzoglou S."/>
            <person name="Lee S.-I."/>
            <person name="Bastuerkmen M."/>
            <person name="Spevak C.C."/>
            <person name="Clutterbuck J."/>
            <person name="Kapitonov V."/>
            <person name="Jurka J."/>
            <person name="Scazzocchio C."/>
            <person name="Farman M.L."/>
            <person name="Butler J."/>
            <person name="Purcell S."/>
            <person name="Harris S."/>
            <person name="Braus G.H."/>
            <person name="Draht O."/>
            <person name="Busch S."/>
            <person name="D'Enfert C."/>
            <person name="Bouchier C."/>
            <person name="Goldman G.H."/>
            <person name="Bell-Pedersen D."/>
            <person name="Griffiths-Jones S."/>
            <person name="Doonan J.H."/>
            <person name="Yu J."/>
            <person name="Vienken K."/>
            <person name="Pain A."/>
            <person name="Freitag M."/>
            <person name="Selker E.U."/>
            <person name="Archer D.B."/>
            <person name="Penalva M.A."/>
            <person name="Oakley B.R."/>
            <person name="Momany M."/>
            <person name="Tanaka T."/>
            <person name="Kumagai T."/>
            <person name="Asai K."/>
            <person name="Machida M."/>
            <person name="Nierman W.C."/>
            <person name="Denning D.W."/>
            <person name="Caddick M.X."/>
            <person name="Hynes M."/>
            <person name="Paoletti M."/>
            <person name="Fischer R."/>
            <person name="Miller B.L."/>
            <person name="Dyer P.S."/>
            <person name="Sachs M.S."/>
            <person name="Osmani S.A."/>
            <person name="Birren B.W."/>
        </authorList>
    </citation>
    <scope>NUCLEOTIDE SEQUENCE [LARGE SCALE GENOMIC DNA]</scope>
    <source>
        <strain>FGSC A4 / ATCC 38163 / CBS 112.46 / NRRL 194 / M139</strain>
    </source>
</reference>
<reference key="2">
    <citation type="journal article" date="2009" name="Fungal Genet. Biol.">
        <title>The 2008 update of the Aspergillus nidulans genome annotation: a community effort.</title>
        <authorList>
            <person name="Wortman J.R."/>
            <person name="Gilsenan J.M."/>
            <person name="Joardar V."/>
            <person name="Deegan J."/>
            <person name="Clutterbuck J."/>
            <person name="Andersen M.R."/>
            <person name="Archer D."/>
            <person name="Bencina M."/>
            <person name="Braus G."/>
            <person name="Coutinho P."/>
            <person name="von Dohren H."/>
            <person name="Doonan J."/>
            <person name="Driessen A.J."/>
            <person name="Durek P."/>
            <person name="Espeso E."/>
            <person name="Fekete E."/>
            <person name="Flipphi M."/>
            <person name="Estrada C.G."/>
            <person name="Geysens S."/>
            <person name="Goldman G."/>
            <person name="de Groot P.W."/>
            <person name="Hansen K."/>
            <person name="Harris S.D."/>
            <person name="Heinekamp T."/>
            <person name="Helmstaedt K."/>
            <person name="Henrissat B."/>
            <person name="Hofmann G."/>
            <person name="Homan T."/>
            <person name="Horio T."/>
            <person name="Horiuchi H."/>
            <person name="James S."/>
            <person name="Jones M."/>
            <person name="Karaffa L."/>
            <person name="Karanyi Z."/>
            <person name="Kato M."/>
            <person name="Keller N."/>
            <person name="Kelly D.E."/>
            <person name="Kiel J.A."/>
            <person name="Kim J.M."/>
            <person name="van der Klei I.J."/>
            <person name="Klis F.M."/>
            <person name="Kovalchuk A."/>
            <person name="Krasevec N."/>
            <person name="Kubicek C.P."/>
            <person name="Liu B."/>
            <person name="Maccabe A."/>
            <person name="Meyer V."/>
            <person name="Mirabito P."/>
            <person name="Miskei M."/>
            <person name="Mos M."/>
            <person name="Mullins J."/>
            <person name="Nelson D.R."/>
            <person name="Nielsen J."/>
            <person name="Oakley B.R."/>
            <person name="Osmani S.A."/>
            <person name="Pakula T."/>
            <person name="Paszewski A."/>
            <person name="Paulsen I."/>
            <person name="Pilsyk S."/>
            <person name="Pocsi I."/>
            <person name="Punt P.J."/>
            <person name="Ram A.F."/>
            <person name="Ren Q."/>
            <person name="Robellet X."/>
            <person name="Robson G."/>
            <person name="Seiboth B."/>
            <person name="van Solingen P."/>
            <person name="Specht T."/>
            <person name="Sun J."/>
            <person name="Taheri-Talesh N."/>
            <person name="Takeshita N."/>
            <person name="Ussery D."/>
            <person name="vanKuyk P.A."/>
            <person name="Visser H."/>
            <person name="van de Vondervoort P.J."/>
            <person name="de Vries R.P."/>
            <person name="Walton J."/>
            <person name="Xiang X."/>
            <person name="Xiong Y."/>
            <person name="Zeng A.P."/>
            <person name="Brandt B.W."/>
            <person name="Cornell M.J."/>
            <person name="van den Hondel C.A."/>
            <person name="Visser J."/>
            <person name="Oliver S.G."/>
            <person name="Turner G."/>
        </authorList>
    </citation>
    <scope>GENOME REANNOTATION</scope>
    <source>
        <strain>FGSC A4 / ATCC 38163 / CBS 112.46 / NRRL 194 / M139</strain>
    </source>
</reference>
<proteinExistence type="inferred from homology"/>
<sequence length="1417" mass="163079">MSARDFVEGEAMLDEEENEEELVDDYGDGEERLETGGNHYDSSEEDEDEDDDEDAVRAVREGFIVDEDEEEEERAERRRERRKRRREEREREDEHLDEEDLELIGELNPGLQYAAAADSKFKRLKRGHKDRDSRQPSQAINDFFNSDEEDEPAPDYGRHRRHPGDEMDDFIEEDVFSDDELQREREDLEVARPRKTIGFGATDTTGLDENALEDMRAAFGDGNEYDFALAMEEEEEQQEEDVEKHLDLKDVFEPSQLAEKMLTEEDNQIRLIDEPERHQIARKPYRNVVLSEDQFREEAAWIANLMLLKKRLEPELREPFQRSVAKVLEFLVTDDWEVPFIFQHRKDYMIHTVKVPVNGASADDSSSQYTIKAEKLLNMTDLWDIFDYDLKFKALVEKRNTIQKTYDNIRSVFSVEDPIVEEMLPIATTMEELQDIQDYLHFQYASQIRDLTLTNGDTNGEVQRRKALTRNFFERVRNSKAYGLVRAFGITADAFAQNALKEGRRQYTEDASERPEDMADGLVDNDFNNSSQVLKAAKGMFAEEIVMSPKMRKVIRQAYYMNGAVDCFRTEKGLRRIDEQHPYYEFKYLRDQQLSDIARSPELFLRMLKAEEEGLIEVKVRFENFENFRKRLYPNIESDNYSELADSWNRLRREAVDLALGKLERVINRSVKENIRQECENHVAKECREAFSQRLDQAPYKPKGMILGTVPRVLALSTGTGIIGRAPIHWAYVEEDGRVLENGKFTDLSLGDKDRGIADGKDLEALVELVNRRRPDVIGVSGMSPETRRLYKLLTEIVDAKDLRGALYTDDRDEEVSDRLEVVIVNDEVARLYQNSDRAKKDHPSFAPLTHYCVGLAKYLQSPLKEYASLGRDIVSIQFKPGQQLVAQELLLKQLETALVDMVNLVGVDINEAVSDPATANLLPYVCGLGPRKAAHLLKIVNMTGGVVNSRFSLLGVGVQYPAMGVKVWNNSASFLYIDYESADADSDPLDNTRVHPEDYDIARKMAADALELDEEDIKAETDENGPGAIVRKLFREDAQDRVNDLILEEYAEQLEKNLNQRKRATLETIRAELQQPYEELRKHFVFLSTDDIFTMLTGETAQTLAEGMVVPISIKSIRDDHIEGKLDCGVDALVGESEMTDRYDIPVRAIYSLHQTVPAKVMFLNRKTFTCNVSLREEQVSRPSRPAADRAHAGEWDYRQEEQDREALEAKTQDGGRTMRVIKHPLFRPFNSTQAVEFLGSQSRGDVVIRPSSKGPDHLAVTWKVADGIFQHIDVLELDKENEFSVGRTLKVGGRFTYSDLDDLIFNHVKAMAKKVDEMMLHEKYQEGSKDSTYQWLETYTKANPRRSAYAFCIDPKHAGYFFLCFKAGEHAQVHSWPVKVIPQGYELQRNPYPDMRALCNGFKLLFTNMQSGKRR</sequence>
<gene>
    <name type="primary">spt6</name>
    <name type="ORF">AN3423</name>
</gene>
<dbReference type="EMBL" id="AACD01000056">
    <property type="protein sequence ID" value="EAA62900.1"/>
    <property type="status" value="ALT_SEQ"/>
    <property type="molecule type" value="Genomic_DNA"/>
</dbReference>
<dbReference type="EMBL" id="BN001306">
    <property type="protein sequence ID" value="CBF82740.1"/>
    <property type="molecule type" value="Genomic_DNA"/>
</dbReference>
<dbReference type="RefSeq" id="XP_661027.1">
    <property type="nucleotide sequence ID" value="XM_655935.1"/>
</dbReference>
<dbReference type="SMR" id="Q5B7Q7"/>
<dbReference type="FunCoup" id="Q5B7Q7">
    <property type="interactions" value="1179"/>
</dbReference>
<dbReference type="STRING" id="227321.Q5B7Q7"/>
<dbReference type="EnsemblFungi" id="CBF82740">
    <property type="protein sequence ID" value="CBF82740"/>
    <property type="gene ID" value="ANIA_03423"/>
</dbReference>
<dbReference type="VEuPathDB" id="FungiDB:AN3423"/>
<dbReference type="eggNOG" id="KOG1856">
    <property type="taxonomic scope" value="Eukaryota"/>
</dbReference>
<dbReference type="HOGENOM" id="CLU_001680_0_1_1"/>
<dbReference type="InParanoid" id="Q5B7Q7"/>
<dbReference type="OMA" id="GYFYLCF"/>
<dbReference type="OrthoDB" id="995477at2759"/>
<dbReference type="Proteomes" id="UP000000560">
    <property type="component" value="Chromosome VI"/>
</dbReference>
<dbReference type="GO" id="GO:0000791">
    <property type="term" value="C:euchromatin"/>
    <property type="evidence" value="ECO:0007669"/>
    <property type="project" value="EnsemblFungi"/>
</dbReference>
<dbReference type="GO" id="GO:0005721">
    <property type="term" value="C:pericentric heterochromatin"/>
    <property type="evidence" value="ECO:0007669"/>
    <property type="project" value="EnsemblFungi"/>
</dbReference>
<dbReference type="GO" id="GO:0008023">
    <property type="term" value="C:transcription elongation factor complex"/>
    <property type="evidence" value="ECO:0000318"/>
    <property type="project" value="GO_Central"/>
</dbReference>
<dbReference type="GO" id="GO:0003677">
    <property type="term" value="F:DNA binding"/>
    <property type="evidence" value="ECO:0007669"/>
    <property type="project" value="InterPro"/>
</dbReference>
<dbReference type="GO" id="GO:0042393">
    <property type="term" value="F:histone binding"/>
    <property type="evidence" value="ECO:0000318"/>
    <property type="project" value="GO_Central"/>
</dbReference>
<dbReference type="GO" id="GO:0031491">
    <property type="term" value="F:nucleosome binding"/>
    <property type="evidence" value="ECO:0000318"/>
    <property type="project" value="GO_Central"/>
</dbReference>
<dbReference type="GO" id="GO:0001073">
    <property type="term" value="F:transcription antitermination factor activity, DNA binding"/>
    <property type="evidence" value="ECO:0007669"/>
    <property type="project" value="EnsemblFungi"/>
</dbReference>
<dbReference type="GO" id="GO:0033554">
    <property type="term" value="P:cellular response to stress"/>
    <property type="evidence" value="ECO:0007669"/>
    <property type="project" value="EnsemblFungi"/>
</dbReference>
<dbReference type="GO" id="GO:0000082">
    <property type="term" value="P:G1/S transition of mitotic cell cycle"/>
    <property type="evidence" value="ECO:0007669"/>
    <property type="project" value="EnsemblFungi"/>
</dbReference>
<dbReference type="GO" id="GO:0000122">
    <property type="term" value="P:negative regulation of transcription by RNA polymerase II"/>
    <property type="evidence" value="ECO:0007669"/>
    <property type="project" value="EnsemblFungi"/>
</dbReference>
<dbReference type="GO" id="GO:0006334">
    <property type="term" value="P:nucleosome assembly"/>
    <property type="evidence" value="ECO:0007669"/>
    <property type="project" value="EnsemblFungi"/>
</dbReference>
<dbReference type="GO" id="GO:0034728">
    <property type="term" value="P:nucleosome organization"/>
    <property type="evidence" value="ECO:0000318"/>
    <property type="project" value="GO_Central"/>
</dbReference>
<dbReference type="GO" id="GO:0016973">
    <property type="term" value="P:poly(A)+ mRNA export from nucleus"/>
    <property type="evidence" value="ECO:0007669"/>
    <property type="project" value="EnsemblFungi"/>
</dbReference>
<dbReference type="GO" id="GO:0032968">
    <property type="term" value="P:positive regulation of transcription elongation by RNA polymerase II"/>
    <property type="evidence" value="ECO:0007669"/>
    <property type="project" value="EnsemblFungi"/>
</dbReference>
<dbReference type="GO" id="GO:0031440">
    <property type="term" value="P:regulation of mRNA 3'-end processing"/>
    <property type="evidence" value="ECO:0007669"/>
    <property type="project" value="EnsemblFungi"/>
</dbReference>
<dbReference type="GO" id="GO:0006368">
    <property type="term" value="P:transcription elongation by RNA polymerase II"/>
    <property type="evidence" value="ECO:0000318"/>
    <property type="project" value="GO_Central"/>
</dbReference>
<dbReference type="GO" id="GO:0140673">
    <property type="term" value="P:transcription elongation-coupled chromatin remodeling"/>
    <property type="evidence" value="ECO:0007669"/>
    <property type="project" value="EnsemblFungi"/>
</dbReference>
<dbReference type="CDD" id="cd09928">
    <property type="entry name" value="SH2_Cterm_SPT6_like"/>
    <property type="match status" value="1"/>
</dbReference>
<dbReference type="CDD" id="cd09918">
    <property type="entry name" value="SH2_Nterm_SPT6_like"/>
    <property type="match status" value="1"/>
</dbReference>
<dbReference type="FunFam" id="3.30.420.140:FF:000007">
    <property type="entry name" value="Transcription elongation factor SPT6"/>
    <property type="match status" value="1"/>
</dbReference>
<dbReference type="FunFam" id="3.30.505.10:FF:000065">
    <property type="entry name" value="Transcription elongation factor SPT6"/>
    <property type="match status" value="1"/>
</dbReference>
<dbReference type="FunFam" id="1.10.10.2740:FF:000002">
    <property type="entry name" value="Transcription elongation factor Spt6"/>
    <property type="match status" value="1"/>
</dbReference>
<dbReference type="FunFam" id="1.10.10.650:FF:000004">
    <property type="entry name" value="Transcription elongation factor Spt6"/>
    <property type="match status" value="1"/>
</dbReference>
<dbReference type="FunFam" id="1.10.3500.10:FF:000005">
    <property type="entry name" value="Transcription elongation factor Spt6"/>
    <property type="match status" value="1"/>
</dbReference>
<dbReference type="FunFam" id="3.30.505.10:FF:000056">
    <property type="entry name" value="Transcription elongation factor Spt6"/>
    <property type="match status" value="1"/>
</dbReference>
<dbReference type="FunFam" id="1.10.150.850:FF:000001">
    <property type="entry name" value="Transcription elongation factor spt6"/>
    <property type="match status" value="1"/>
</dbReference>
<dbReference type="Gene3D" id="1.10.10.650">
    <property type="entry name" value="RuvA domain 2-like"/>
    <property type="match status" value="1"/>
</dbReference>
<dbReference type="Gene3D" id="3.30.505.10">
    <property type="entry name" value="SH2 domain"/>
    <property type="match status" value="2"/>
</dbReference>
<dbReference type="Gene3D" id="1.10.10.2740">
    <property type="entry name" value="Spt6, Death-like domain"/>
    <property type="match status" value="1"/>
</dbReference>
<dbReference type="Gene3D" id="1.10.150.850">
    <property type="entry name" value="Spt6, helix-hairpin-helix domain"/>
    <property type="match status" value="1"/>
</dbReference>
<dbReference type="Gene3D" id="1.10.3500.10">
    <property type="entry name" value="Tex N-terminal region-like"/>
    <property type="match status" value="1"/>
</dbReference>
<dbReference type="Gene3D" id="3.30.420.140">
    <property type="entry name" value="YqgF/RNase H-like domain"/>
    <property type="match status" value="1"/>
</dbReference>
<dbReference type="InterPro" id="IPR041692">
    <property type="entry name" value="HHH_9"/>
</dbReference>
<dbReference type="InterPro" id="IPR012340">
    <property type="entry name" value="NA-bd_OB-fold"/>
</dbReference>
<dbReference type="InterPro" id="IPR012337">
    <property type="entry name" value="RNaseH-like_sf"/>
</dbReference>
<dbReference type="InterPro" id="IPR010994">
    <property type="entry name" value="RuvA_2-like"/>
</dbReference>
<dbReference type="InterPro" id="IPR036860">
    <property type="entry name" value="SH2_dom_sf"/>
</dbReference>
<dbReference type="InterPro" id="IPR049540">
    <property type="entry name" value="Spt6-like_S1"/>
</dbReference>
<dbReference type="InterPro" id="IPR028083">
    <property type="entry name" value="Spt6_acidic_N_dom"/>
</dbReference>
<dbReference type="InterPro" id="IPR042066">
    <property type="entry name" value="Spt6_death-like"/>
</dbReference>
<dbReference type="InterPro" id="IPR032706">
    <property type="entry name" value="Spt6_HHH"/>
</dbReference>
<dbReference type="InterPro" id="IPR028088">
    <property type="entry name" value="Spt6_HTH_DNA-bd_dom"/>
</dbReference>
<dbReference type="InterPro" id="IPR035420">
    <property type="entry name" value="Spt6_SH2"/>
</dbReference>
<dbReference type="InterPro" id="IPR035018">
    <property type="entry name" value="Spt6_SH2_C"/>
</dbReference>
<dbReference type="InterPro" id="IPR035019">
    <property type="entry name" value="Spt6_SH2_N"/>
</dbReference>
<dbReference type="InterPro" id="IPR028231">
    <property type="entry name" value="Spt6_YqgF"/>
</dbReference>
<dbReference type="InterPro" id="IPR055179">
    <property type="entry name" value="Tex-like_central_region"/>
</dbReference>
<dbReference type="InterPro" id="IPR023323">
    <property type="entry name" value="Tex-like_dom_sf"/>
</dbReference>
<dbReference type="InterPro" id="IPR023319">
    <property type="entry name" value="Tex-like_HTH_dom_sf"/>
</dbReference>
<dbReference type="InterPro" id="IPR017072">
    <property type="entry name" value="TF_Spt6"/>
</dbReference>
<dbReference type="InterPro" id="IPR037027">
    <property type="entry name" value="YqgF/RNaseH-like_dom_sf"/>
</dbReference>
<dbReference type="PANTHER" id="PTHR10145">
    <property type="entry name" value="TRANSCRIPTION ELONGATION FACTOR SPT6"/>
    <property type="match status" value="1"/>
</dbReference>
<dbReference type="PANTHER" id="PTHR10145:SF6">
    <property type="entry name" value="TRANSCRIPTION ELONGATION FACTOR SPT6"/>
    <property type="match status" value="1"/>
</dbReference>
<dbReference type="Pfam" id="PF14635">
    <property type="entry name" value="HHH_7"/>
    <property type="match status" value="1"/>
</dbReference>
<dbReference type="Pfam" id="PF17674">
    <property type="entry name" value="HHH_9"/>
    <property type="match status" value="1"/>
</dbReference>
<dbReference type="Pfam" id="PF14641">
    <property type="entry name" value="HTH_44"/>
    <property type="match status" value="1"/>
</dbReference>
<dbReference type="Pfam" id="PF14633">
    <property type="entry name" value="SH2_2"/>
    <property type="match status" value="1"/>
</dbReference>
<dbReference type="Pfam" id="PF14632">
    <property type="entry name" value="SPT6_acidic"/>
    <property type="match status" value="1"/>
</dbReference>
<dbReference type="Pfam" id="PF21710">
    <property type="entry name" value="Spt6_S1"/>
    <property type="match status" value="1"/>
</dbReference>
<dbReference type="Pfam" id="PF22706">
    <property type="entry name" value="Tex_central_region"/>
    <property type="match status" value="1"/>
</dbReference>
<dbReference type="Pfam" id="PF14639">
    <property type="entry name" value="YqgF"/>
    <property type="match status" value="1"/>
</dbReference>
<dbReference type="PIRSF" id="PIRSF036947">
    <property type="entry name" value="Spt6"/>
    <property type="match status" value="1"/>
</dbReference>
<dbReference type="SUPFAM" id="SSF50249">
    <property type="entry name" value="Nucleic acid-binding proteins"/>
    <property type="match status" value="1"/>
</dbReference>
<dbReference type="SUPFAM" id="SSF53098">
    <property type="entry name" value="Ribonuclease H-like"/>
    <property type="match status" value="1"/>
</dbReference>
<dbReference type="SUPFAM" id="SSF47781">
    <property type="entry name" value="RuvA domain 2-like"/>
    <property type="match status" value="2"/>
</dbReference>
<dbReference type="SUPFAM" id="SSF55550">
    <property type="entry name" value="SH2 domain"/>
    <property type="match status" value="1"/>
</dbReference>
<dbReference type="SUPFAM" id="SSF158832">
    <property type="entry name" value="Tex N-terminal region-like"/>
    <property type="match status" value="1"/>
</dbReference>
<accession>Q5B7Q7</accession>
<accession>C8VHJ8</accession>
<organism>
    <name type="scientific">Emericella nidulans (strain FGSC A4 / ATCC 38163 / CBS 112.46 / NRRL 194 / M139)</name>
    <name type="common">Aspergillus nidulans</name>
    <dbReference type="NCBI Taxonomy" id="227321"/>
    <lineage>
        <taxon>Eukaryota</taxon>
        <taxon>Fungi</taxon>
        <taxon>Dikarya</taxon>
        <taxon>Ascomycota</taxon>
        <taxon>Pezizomycotina</taxon>
        <taxon>Eurotiomycetes</taxon>
        <taxon>Eurotiomycetidae</taxon>
        <taxon>Eurotiales</taxon>
        <taxon>Aspergillaceae</taxon>
        <taxon>Aspergillus</taxon>
        <taxon>Aspergillus subgen. Nidulantes</taxon>
    </lineage>
</organism>
<keyword id="KW-0158">Chromosome</keyword>
<keyword id="KW-0539">Nucleus</keyword>
<keyword id="KW-1185">Reference proteome</keyword>
<keyword id="KW-0727">SH2 domain</keyword>
<keyword id="KW-0804">Transcription</keyword>
<comment type="function">
    <text evidence="1">Histone H3-H4 chaperone that plays a role in maintenance of chromatin structure during RNA polymerase II transcription elongation thereby repressing transcription initiation from cryptic promoters. Mediates the reassembly of nucleosomes onto the promoters of at least a selected set of genes during repression; the nucleosome reassembly is essential for transcriptional repression. Essential for viability.</text>
</comment>
<comment type="subcellular location">
    <subcellularLocation>
        <location evidence="1">Nucleus</location>
    </subcellularLocation>
    <subcellularLocation>
        <location evidence="1">Chromosome</location>
    </subcellularLocation>
</comment>
<comment type="similarity">
    <text evidence="3">Belongs to the SPT6 family.</text>
</comment>
<comment type="sequence caution" evidence="3">
    <conflict type="erroneous gene model prediction">
        <sequence resource="EMBL-CDS" id="EAA62900"/>
    </conflict>
</comment>